<organism>
    <name type="scientific">Pongo abelii</name>
    <name type="common">Sumatran orangutan</name>
    <name type="synonym">Pongo pygmaeus abelii</name>
    <dbReference type="NCBI Taxonomy" id="9601"/>
    <lineage>
        <taxon>Eukaryota</taxon>
        <taxon>Metazoa</taxon>
        <taxon>Chordata</taxon>
        <taxon>Craniata</taxon>
        <taxon>Vertebrata</taxon>
        <taxon>Euteleostomi</taxon>
        <taxon>Mammalia</taxon>
        <taxon>Eutheria</taxon>
        <taxon>Euarchontoglires</taxon>
        <taxon>Primates</taxon>
        <taxon>Haplorrhini</taxon>
        <taxon>Catarrhini</taxon>
        <taxon>Hominidae</taxon>
        <taxon>Pongo</taxon>
    </lineage>
</organism>
<proteinExistence type="evidence at transcript level"/>
<comment type="function">
    <text evidence="3">RNA-binding factor that recruits target transcripts to cytoplasmic protein-RNA complexes (mRNPs). This transcript 'caging' into mRNPs allows mRNA transport and transient storage. It also modulates the rate and location at which target transcripts encounter the translational apparatus and shields them from endonuclease attacks or microRNA-mediated degradation (By similarity). Preferentially binds to N6-methyladenosine (m6A)-containing mRNAs and increases their stability (By similarity). Binds to the 5'-UTR of the insulin-like growth factor 2 (IGF2) mRNAs. Binding is isoform-specific. Binds to beta-actin/ACTB and MYC transcripts (By similarity). Increases MYC mRNA stability by binding to the coding region instability determinant (CRD) and binding is enhanced by m6A-modification of the CRD (By similarity).</text>
</comment>
<comment type="subunit">
    <text evidence="3">Can form homooligomers and heterooligomers with IGF2BP1 and IGF2BP3 in an RNA-dependent manner. Interacts with HNRPD. Interacts with IGF2BP1. Interacts with ELAVL1, DHX9, HNRNPU, MATR3 and PABPC1.</text>
</comment>
<comment type="subcellular location">
    <subcellularLocation>
        <location evidence="1">Nucleus</location>
    </subcellularLocation>
    <subcellularLocation>
        <location evidence="1">Cytoplasm</location>
    </subcellularLocation>
    <subcellularLocation>
        <location evidence="3">Cytoplasm</location>
        <location evidence="3">P-body</location>
    </subcellularLocation>
    <subcellularLocation>
        <location evidence="3">Cytoplasm</location>
        <location evidence="3">Stress granule</location>
    </subcellularLocation>
    <text evidence="1">Localized in cytoplasmic mRNP granules containing untranslated mRNAs. Localizes at the connecting piece and the tail of the spermatozoa. In response to cellular stress, such as oxidative stress, recruited to stress granules (By similarity).</text>
</comment>
<comment type="domain">
    <text evidence="3">Domain KH3 and KH4 are the major RNA-binding modules, although KH1 and KH2 may also contribute. The contribution to RNA-binding of individual KH domains may be target-specific. KH1 and KH2, and possibly KH3 and KH4, promote the formation of higher ordered protein-RNA complexes, which may be essential for IGF2BP1 cytoplasmic retention. KH domains are required for RNA-dependent homo- and heterooligomerization and for localization to stress granules.</text>
</comment>
<comment type="similarity">
    <text evidence="7">Belongs to the RRM IMP/VICKZ family.</text>
</comment>
<gene>
    <name type="primary">IGF2BP2</name>
    <name type="synonym">VICKZ2</name>
</gene>
<keyword id="KW-0963">Cytoplasm</keyword>
<keyword id="KW-0509">mRNA transport</keyword>
<keyword id="KW-0539">Nucleus</keyword>
<keyword id="KW-0597">Phosphoprotein</keyword>
<keyword id="KW-1185">Reference proteome</keyword>
<keyword id="KW-0677">Repeat</keyword>
<keyword id="KW-0694">RNA-binding</keyword>
<keyword id="KW-0810">Translation regulation</keyword>
<keyword id="KW-0813">Transport</keyword>
<feature type="chain" id="PRO_0000244498" description="Insulin-like growth factor 2 mRNA-binding protein 2">
    <location>
        <begin position="1"/>
        <end position="556"/>
    </location>
</feature>
<feature type="domain" description="RRM 1" evidence="5">
    <location>
        <begin position="3"/>
        <end position="76"/>
    </location>
</feature>
<feature type="domain" description="RRM 2" evidence="5">
    <location>
        <begin position="82"/>
        <end position="157"/>
    </location>
</feature>
<feature type="domain" description="KH 1" evidence="4">
    <location>
        <begin position="193"/>
        <end position="258"/>
    </location>
</feature>
<feature type="domain" description="KH 2" evidence="4">
    <location>
        <begin position="274"/>
        <end position="341"/>
    </location>
</feature>
<feature type="domain" description="KH 3" evidence="4">
    <location>
        <begin position="384"/>
        <end position="449"/>
    </location>
</feature>
<feature type="domain" description="KH 4" evidence="4">
    <location>
        <begin position="466"/>
        <end position="532"/>
    </location>
</feature>
<feature type="region of interest" description="Disordered" evidence="6">
    <location>
        <begin position="156"/>
        <end position="188"/>
    </location>
</feature>
<feature type="compositionally biased region" description="Basic and acidic residues" evidence="6">
    <location>
        <begin position="170"/>
        <end position="180"/>
    </location>
</feature>
<feature type="modified residue" description="Phosphoserine" evidence="3">
    <location>
        <position position="11"/>
    </location>
</feature>
<feature type="modified residue" description="Phosphoserine" evidence="3">
    <location>
        <position position="162"/>
    </location>
</feature>
<feature type="modified residue" description="Phosphoserine" evidence="3">
    <location>
        <position position="164"/>
    </location>
</feature>
<feature type="modified residue" description="Phosphothreonine" evidence="2">
    <location>
        <position position="507"/>
    </location>
</feature>
<sequence length="556" mass="61785">MMNKLYIGNLSPAVTVDDLRQLFGDRKLPLAGQVLLKSGYAFVDYPDQNWAIRAIETLSGKVELHGKIMEVDYSVSKKLRSRKIQIRNIPPHLQWEVLDGLLAQYGTVENVEQVNTDTETAVVNVTYATREEAKIAVEKLSGHQFENYSFKISYIPDEEVSSPSPPQRAQRGDHSSREQGHAPGGTSQARQIDFPLRILVPTQFVGAIIGKEGLTIKNITKQTQSRVDIHRKENSGAAEKPVTIHATPEGTSEACRMILEIMQKEADETKLAEEIPLKILAHNGLVGRLIGKEGRNLKKIEHETGTKITISSLQDLSIYNPERTITVKGTVEACASAEIEIMKKLREAFENDMLAVNTHSGYFSSLYPHHQFGPFPHHHSYPEQEIVNLFIPTQAVGAIIGKKGAHIKQLARFAGASIKIAPAEGPDVSERMVIITGPPEAQFKAQGRIFGKLKEENFFNPKEEVKLEAHIRVPSSTAGRVIGKGGKTVNELQNLTSAEVIVPRDQTPDENEEVIVRIIGHFFASQTAQRKIREIVQQVKQQEQKYPQGVASQCSK</sequence>
<evidence type="ECO:0000250" key="1"/>
<evidence type="ECO:0000250" key="2">
    <source>
        <dbReference type="UniProtKB" id="Q5SF07"/>
    </source>
</evidence>
<evidence type="ECO:0000250" key="3">
    <source>
        <dbReference type="UniProtKB" id="Q9Y6M1"/>
    </source>
</evidence>
<evidence type="ECO:0000255" key="4">
    <source>
        <dbReference type="PROSITE-ProRule" id="PRU00117"/>
    </source>
</evidence>
<evidence type="ECO:0000255" key="5">
    <source>
        <dbReference type="PROSITE-ProRule" id="PRU00176"/>
    </source>
</evidence>
<evidence type="ECO:0000256" key="6">
    <source>
        <dbReference type="SAM" id="MobiDB-lite"/>
    </source>
</evidence>
<evidence type="ECO:0000305" key="7"/>
<name>IF2B2_PONAB</name>
<protein>
    <recommendedName>
        <fullName>Insulin-like growth factor 2 mRNA-binding protein 2</fullName>
        <shortName>IGF2 mRNA-binding protein 2</shortName>
        <shortName>IMP-2</shortName>
    </recommendedName>
    <alternativeName>
        <fullName>IGF-II mRNA-binding protein 2</fullName>
    </alternativeName>
    <alternativeName>
        <fullName>VICKZ family member 2</fullName>
    </alternativeName>
</protein>
<reference key="1">
    <citation type="submission" date="2004-11" db="EMBL/GenBank/DDBJ databases">
        <authorList>
            <consortium name="The German cDNA consortium"/>
        </authorList>
    </citation>
    <scope>NUCLEOTIDE SEQUENCE [LARGE SCALE MRNA]</scope>
    <source>
        <tissue>Heart</tissue>
    </source>
</reference>
<reference key="2">
    <citation type="journal article" date="2005" name="Biol. Cell">
        <title>VICKZ proteins: a multi-talented family of regulatory RNA-binding proteins.</title>
        <authorList>
            <person name="Yisraeli J.K."/>
        </authorList>
    </citation>
    <scope>REVIEW</scope>
</reference>
<dbReference type="EMBL" id="CR858786">
    <property type="protein sequence ID" value="CAH90992.1"/>
    <property type="molecule type" value="mRNA"/>
</dbReference>
<dbReference type="RefSeq" id="NP_001125573.1">
    <property type="nucleotide sequence ID" value="NM_001132101.1"/>
</dbReference>
<dbReference type="SMR" id="Q5RB68"/>
<dbReference type="FunCoup" id="Q5RB68">
    <property type="interactions" value="2019"/>
</dbReference>
<dbReference type="STRING" id="9601.ENSPPYP00000016078"/>
<dbReference type="GeneID" id="100172487"/>
<dbReference type="KEGG" id="pon:100172487"/>
<dbReference type="CTD" id="10644"/>
<dbReference type="InParanoid" id="Q5RB68"/>
<dbReference type="OrthoDB" id="752362at2759"/>
<dbReference type="Proteomes" id="UP000001595">
    <property type="component" value="Unplaced"/>
</dbReference>
<dbReference type="GO" id="GO:0005737">
    <property type="term" value="C:cytoplasm"/>
    <property type="evidence" value="ECO:0000250"/>
    <property type="project" value="UniProtKB"/>
</dbReference>
<dbReference type="GO" id="GO:0010494">
    <property type="term" value="C:cytoplasmic stress granule"/>
    <property type="evidence" value="ECO:0000250"/>
    <property type="project" value="UniProtKB"/>
</dbReference>
<dbReference type="GO" id="GO:0005856">
    <property type="term" value="C:cytoskeleton"/>
    <property type="evidence" value="ECO:0000250"/>
    <property type="project" value="UniProtKB"/>
</dbReference>
<dbReference type="GO" id="GO:0005634">
    <property type="term" value="C:nucleus"/>
    <property type="evidence" value="ECO:0000250"/>
    <property type="project" value="UniProtKB"/>
</dbReference>
<dbReference type="GO" id="GO:0000932">
    <property type="term" value="C:P-body"/>
    <property type="evidence" value="ECO:0000250"/>
    <property type="project" value="UniProtKB"/>
</dbReference>
<dbReference type="GO" id="GO:0003730">
    <property type="term" value="F:mRNA 3'-UTR binding"/>
    <property type="evidence" value="ECO:0000250"/>
    <property type="project" value="UniProtKB"/>
</dbReference>
<dbReference type="GO" id="GO:0048027">
    <property type="term" value="F:mRNA 5'-UTR binding"/>
    <property type="evidence" value="ECO:0000250"/>
    <property type="project" value="UniProtKB"/>
</dbReference>
<dbReference type="GO" id="GO:1990247">
    <property type="term" value="F:N6-methyladenosine-containing RNA reader activity"/>
    <property type="evidence" value="ECO:0000250"/>
    <property type="project" value="UniProtKB"/>
</dbReference>
<dbReference type="GO" id="GO:0070934">
    <property type="term" value="P:CRD-mediated mRNA stabilization"/>
    <property type="evidence" value="ECO:0000250"/>
    <property type="project" value="UniProtKB"/>
</dbReference>
<dbReference type="GO" id="GO:0051028">
    <property type="term" value="P:mRNA transport"/>
    <property type="evidence" value="ECO:0007669"/>
    <property type="project" value="UniProtKB-KW"/>
</dbReference>
<dbReference type="GO" id="GO:0006417">
    <property type="term" value="P:regulation of translation"/>
    <property type="evidence" value="ECO:0007669"/>
    <property type="project" value="UniProtKB-KW"/>
</dbReference>
<dbReference type="CDD" id="cd22491">
    <property type="entry name" value="KH-I_IGF2BP2_rpt1"/>
    <property type="match status" value="1"/>
</dbReference>
<dbReference type="CDD" id="cd22497">
    <property type="entry name" value="KH-I_IGF2BP2_rpt3"/>
    <property type="match status" value="1"/>
</dbReference>
<dbReference type="CDD" id="cd22500">
    <property type="entry name" value="KH-I_IGF2BP2_rpt4"/>
    <property type="match status" value="1"/>
</dbReference>
<dbReference type="CDD" id="cd12626">
    <property type="entry name" value="RRM1_IGF2BP2"/>
    <property type="match status" value="1"/>
</dbReference>
<dbReference type="CDD" id="cd12629">
    <property type="entry name" value="RRM2_IGF2BP2"/>
    <property type="match status" value="1"/>
</dbReference>
<dbReference type="FunFam" id="3.30.310.210:FF:000001">
    <property type="entry name" value="insulin-like growth factor 2 mRNA-binding protein 1 isoform X1"/>
    <property type="match status" value="1"/>
</dbReference>
<dbReference type="FunFam" id="3.30.70.330:FF:000293">
    <property type="entry name" value="insulin-like growth factor 2 mRNA-binding protein 2 isoform X1"/>
    <property type="match status" value="1"/>
</dbReference>
<dbReference type="FunFam" id="3.30.1370.10:FF:000026">
    <property type="entry name" value="Insulin-like growth factor 2 mRNA-binding protein 3"/>
    <property type="match status" value="1"/>
</dbReference>
<dbReference type="FunFam" id="3.30.1370.10:FF:000027">
    <property type="entry name" value="insulin-like growth factor 2 mRNA-binding protein 3 isoform X1"/>
    <property type="match status" value="1"/>
</dbReference>
<dbReference type="FunFam" id="3.30.70.330:FF:000099">
    <property type="entry name" value="insulin-like growth factor 2 mRNA-binding protein 3 isoform X1"/>
    <property type="match status" value="1"/>
</dbReference>
<dbReference type="Gene3D" id="3.30.310.210">
    <property type="match status" value="1"/>
</dbReference>
<dbReference type="Gene3D" id="3.30.70.330">
    <property type="match status" value="2"/>
</dbReference>
<dbReference type="Gene3D" id="3.30.1370.10">
    <property type="entry name" value="K Homology domain, type 1"/>
    <property type="match status" value="2"/>
</dbReference>
<dbReference type="InterPro" id="IPR034843">
    <property type="entry name" value="IGF2BP2_RRM1"/>
</dbReference>
<dbReference type="InterPro" id="IPR004087">
    <property type="entry name" value="KH_dom"/>
</dbReference>
<dbReference type="InterPro" id="IPR004088">
    <property type="entry name" value="KH_dom_type_1"/>
</dbReference>
<dbReference type="InterPro" id="IPR036612">
    <property type="entry name" value="KH_dom_type_1_sf"/>
</dbReference>
<dbReference type="InterPro" id="IPR012677">
    <property type="entry name" value="Nucleotide-bd_a/b_plait_sf"/>
</dbReference>
<dbReference type="InterPro" id="IPR035979">
    <property type="entry name" value="RBD_domain_sf"/>
</dbReference>
<dbReference type="InterPro" id="IPR000504">
    <property type="entry name" value="RRM_dom"/>
</dbReference>
<dbReference type="PANTHER" id="PTHR10288">
    <property type="entry name" value="KH DOMAIN CONTAINING RNA BINDING PROTEIN"/>
    <property type="match status" value="1"/>
</dbReference>
<dbReference type="Pfam" id="PF00013">
    <property type="entry name" value="KH_1"/>
    <property type="match status" value="4"/>
</dbReference>
<dbReference type="Pfam" id="PF00076">
    <property type="entry name" value="RRM_1"/>
    <property type="match status" value="2"/>
</dbReference>
<dbReference type="SMART" id="SM00322">
    <property type="entry name" value="KH"/>
    <property type="match status" value="4"/>
</dbReference>
<dbReference type="SMART" id="SM00360">
    <property type="entry name" value="RRM"/>
    <property type="match status" value="2"/>
</dbReference>
<dbReference type="SUPFAM" id="SSF54791">
    <property type="entry name" value="Eukaryotic type KH-domain (KH-domain type I)"/>
    <property type="match status" value="4"/>
</dbReference>
<dbReference type="SUPFAM" id="SSF54928">
    <property type="entry name" value="RNA-binding domain, RBD"/>
    <property type="match status" value="1"/>
</dbReference>
<dbReference type="PROSITE" id="PS50084">
    <property type="entry name" value="KH_TYPE_1"/>
    <property type="match status" value="4"/>
</dbReference>
<dbReference type="PROSITE" id="PS50102">
    <property type="entry name" value="RRM"/>
    <property type="match status" value="2"/>
</dbReference>
<accession>Q5RB68</accession>